<proteinExistence type="evidence at protein level"/>
<feature type="signal peptide" evidence="1">
    <location>
        <begin position="1"/>
        <end position="25"/>
    </location>
</feature>
<feature type="chain" id="PRO_0000000461" description="Gamma-aminobutyric acid receptor subunit beta-2">
    <location>
        <begin position="26"/>
        <end position="474"/>
    </location>
</feature>
<feature type="topological domain" description="Extracellular" evidence="17">
    <location>
        <begin position="26"/>
        <end position="244"/>
    </location>
</feature>
<feature type="transmembrane region" description="Helical" evidence="17">
    <location>
        <begin position="245"/>
        <end position="266"/>
    </location>
</feature>
<feature type="transmembrane region" description="Helical" evidence="17">
    <location>
        <begin position="270"/>
        <end position="292"/>
    </location>
</feature>
<feature type="transmembrane region" description="Helical" evidence="17">
    <location>
        <begin position="304"/>
        <end position="326"/>
    </location>
</feature>
<feature type="topological domain" description="Cytoplasmic" evidence="17">
    <location>
        <begin position="327"/>
        <end position="451"/>
    </location>
</feature>
<feature type="transmembrane region" description="Helical" evidence="17">
    <location>
        <begin position="452"/>
        <end position="473"/>
    </location>
</feature>
<feature type="binding site" description="in chain B" evidence="5">
    <location>
        <position position="121"/>
    </location>
    <ligand>
        <name>histamine</name>
        <dbReference type="ChEBI" id="CHEBI:58432"/>
        <note>ligand shared between two neighboring beta subunits</note>
    </ligand>
</feature>
<feature type="binding site" description="in chain B" evidence="5">
    <location>
        <begin position="180"/>
        <end position="181"/>
    </location>
    <ligand>
        <name>histamine</name>
        <dbReference type="ChEBI" id="CHEBI:58432"/>
        <note>ligand shared between two neighboring beta subunits</note>
    </ligand>
</feature>
<feature type="binding site" evidence="4">
    <location>
        <position position="181"/>
    </location>
    <ligand>
        <name>4-aminobutanoate</name>
        <dbReference type="ChEBI" id="CHEBI:59888"/>
        <note>ligand shared with the neighboring alpha subunit</note>
    </ligand>
</feature>
<feature type="binding site" evidence="6">
    <location>
        <position position="226"/>
    </location>
    <ligand>
        <name>4-aminobutanoate</name>
        <dbReference type="ChEBI" id="CHEBI:59888"/>
        <note>ligand shared with the neighboring alpha subunit</note>
    </ligand>
</feature>
<feature type="binding site" description="in chain B" evidence="5">
    <location>
        <position position="226"/>
    </location>
    <ligand>
        <name>histamine</name>
        <dbReference type="ChEBI" id="CHEBI:58432"/>
        <note>ligand shared between two neighboring beta subunits</note>
    </ligand>
</feature>
<feature type="modified residue" description="Phosphotyrosine" evidence="7">
    <location>
        <position position="403"/>
    </location>
</feature>
<feature type="glycosylation site" description="N-linked (GlcNAc...) asparagine" evidence="8">
    <location>
        <position position="32"/>
    </location>
</feature>
<feature type="glycosylation site" description="N-linked (GlcNAc...) asparagine" evidence="8">
    <location>
        <position position="104"/>
    </location>
</feature>
<feature type="glycosylation site" description="N-linked (GlcNAc...) asparagine" evidence="8">
    <location>
        <position position="173"/>
    </location>
</feature>
<feature type="disulfide bond" evidence="6">
    <location>
        <begin position="160"/>
        <end position="174"/>
    </location>
</feature>
<accession>P63138</accession>
<accession>P15432</accession>
<protein>
    <recommendedName>
        <fullName evidence="6">Gamma-aminobutyric acid receptor subunit beta-2</fullName>
    </recommendedName>
    <alternativeName>
        <fullName>GABA(A) receptor subunit beta-2</fullName>
        <shortName evidence="6">GABAAR subunit beta-2</shortName>
    </alternativeName>
</protein>
<sequence length="474" mass="54633">MWRVRKRGYFGIWSFPLIIAAVCAQSVNDPSNMSLVKETVDRLLKGYDIRLRPDFGGPPVAVGMNIDIASIDMVSEVNMDYTLTMYFQQAWRDKRLSYNVIPLNLTLDNRVADQLWVPDTYFLNDKKSFVHGVTVKNRMIRLHPDGTVLYGLRITTTAACMMDLRRYPLDEQNCTLEIESYGYTTDDIEFYWRGDDNAVTGVTKIELPQFSIVDYKLITKKVVFSTGSYPRLSLSFKLKRNIGYFILQTYMPSILITILSWVSFWINYDASAARVALGITTVLTMTTINTHLRETLPKIPYVKAIDMYLMGCFVFVFMALLEYALVNYIFFGRGPQRQKKAAEKAANANNEKMRLDVNKMDPHENILLSTLEIKNEMATSEAVMGLGDPRSTMLAYDASSIQYRKAGLPRHSFGRNALERHVAQKKSRLRRRASQLKITIPDLTDVNAIDRWSRIFFPVVFSFFNIVYWLYYVN</sequence>
<reference key="1">
    <citation type="journal article" date="1989" name="EMBO J.">
        <title>GABAA receptor beta subunit heterogeneity: functional expression of cloned cDNAs.</title>
        <authorList>
            <person name="Ymer S."/>
            <person name="Schofield P.R."/>
            <person name="Draguhn A."/>
            <person name="Werner P."/>
            <person name="Koehler M."/>
            <person name="Seeburg P.H."/>
        </authorList>
    </citation>
    <scope>NUCLEOTIDE SEQUENCE [MRNA]</scope>
    <scope>FUNCTION</scope>
    <source>
        <tissue>Brain</tissue>
    </source>
</reference>
<reference key="2">
    <citation type="submission" date="2004-03" db="EMBL/GenBank/DDBJ databases">
        <authorList>
            <person name="Groot Kormelink P.J."/>
        </authorList>
    </citation>
    <scope>NUCLEOTIDE SEQUENCE [MRNA]</scope>
    <source>
        <strain>Sprague-Dawley</strain>
        <tissue>Brain</tissue>
    </source>
</reference>
<reference key="3">
    <citation type="journal article" date="1991" name="FEBS Lett.">
        <title>The gamma 3-subunit of the GABAA-receptor confers sensitivity to benzodiazepine receptor ligands.</title>
        <authorList>
            <person name="Knoflach F."/>
            <person name="Rhyner T."/>
            <person name="Villa M."/>
            <person name="Kellenberger S."/>
            <person name="Drescher U."/>
            <person name="Malherbe P."/>
            <person name="Sigel E."/>
            <person name="Moehler H."/>
        </authorList>
    </citation>
    <scope>FUNCTION</scope>
    <scope>TRANSPORTER ACTIVITY</scope>
    <scope>INTERACTION WITH GABRA5 AND GABRG3</scope>
    <source>
        <strain>ZUR-SIV</strain>
        <tissue>Brain</tissue>
    </source>
</reference>
<reference key="4">
    <citation type="journal article" date="1998" name="J. Neurosci.">
        <title>Segregation of different GABAA receptors to synaptic and extrasynaptic membranes of cerebellar granule cells.</title>
        <authorList>
            <person name="Nusser Z."/>
            <person name="Sieghart W."/>
            <person name="Somogyi P."/>
        </authorList>
    </citation>
    <scope>FUNCTION</scope>
    <scope>SUBCELLULAR LOCATION</scope>
    <scope>TISSUE SPECIFICITY</scope>
</reference>
<reference key="5">
    <citation type="journal article" date="2001" name="Nat. Neurosci.">
        <title>GABA(A) receptor cell surface number and subunit stability are regulated by the ubiquitin-like protein Plic-1.</title>
        <authorList>
            <person name="Bedford F.K."/>
            <person name="Kittler J.T."/>
            <person name="Muller E."/>
            <person name="Thomas P."/>
            <person name="Uren J.M."/>
            <person name="Merlo D."/>
            <person name="Wisden W."/>
            <person name="Triller A."/>
            <person name="Smart T.G."/>
            <person name="Moss S.J."/>
        </authorList>
    </citation>
    <scope>INTERACTION WITH UBQLN1</scope>
</reference>
<reference key="6">
    <citation type="journal article" date="2006" name="J. Biol. Chem.">
        <title>A novel function of ionotropic gamma-aminobutyric acid receptors involving alveolar fluid homeostasis.</title>
        <authorList>
            <person name="Jin N."/>
            <person name="Kolliputi N."/>
            <person name="Gou D."/>
            <person name="Weng T."/>
            <person name="Liu L."/>
        </authorList>
    </citation>
    <scope>TISSUE SPECIFICITY</scope>
</reference>
<reference key="7">
    <citation type="journal article" date="2008" name="J. Biol. Chem.">
        <title>Histamine action on vertebrate GABAA receptors: direct channel gating and potentiation of GABA responses.</title>
        <authorList>
            <person name="Saras A."/>
            <person name="Gisselmann G."/>
            <person name="Vogt-Eisele A.K."/>
            <person name="Erlkamp K.S."/>
            <person name="Kletke O."/>
            <person name="Pusch H."/>
            <person name="Hatt H."/>
        </authorList>
    </citation>
    <scope>FUNCTION</scope>
    <scope>SUBCELLULAR LOCATION</scope>
    <scope>SUBUNIT</scope>
    <scope>TRANSPORTER ACTIVITY</scope>
    <scope>ACTIVITY REGULATION</scope>
</reference>
<reference key="8">
    <citation type="journal article" date="2014" name="Eur. J. Cell Biol.">
        <title>The kinesin KIF21B participates in the cell surface delivery of gamma2 subunit-containing GABAA receptors.</title>
        <authorList>
            <person name="Labonte D."/>
            <person name="Thies E."/>
            <person name="Kneussel M."/>
        </authorList>
    </citation>
    <scope>INTERACTION WITH KIF21B</scope>
    <scope>SUBCELLULAR LOCATION</scope>
    <scope>TISSUE SPECIFICITY</scope>
</reference>
<reference key="9">
    <citation type="journal article" date="2017" name="Neuron">
        <title>GARLH family proteins stabilize GABAA receptors at synapses.</title>
        <authorList>
            <person name="Yamasaki T."/>
            <person name="Hoyos-Ramirez E."/>
            <person name="Martenson J.S."/>
            <person name="Morimoto-Tomita M."/>
            <person name="Tomita S."/>
        </authorList>
    </citation>
    <scope>IDENTIFICATION BY MASS SPECTROMETRY</scope>
    <scope>IDENTIFICATION IN A COMPLEX WITH NLGN2; LHFPL4; GABRA1; GABRG2 AND GABRB3</scope>
</reference>
<gene>
    <name evidence="18" type="primary">Gabrb2</name>
    <name type="synonym">Gabrb-2</name>
</gene>
<name>GBRB2_RAT</name>
<dbReference type="EMBL" id="X15467">
    <property type="protein sequence ID" value="CAA33494.1"/>
    <property type="molecule type" value="mRNA"/>
</dbReference>
<dbReference type="EMBL" id="AY574251">
    <property type="protein sequence ID" value="AAS90347.1"/>
    <property type="molecule type" value="mRNA"/>
</dbReference>
<dbReference type="PIR" id="S04465">
    <property type="entry name" value="S04465"/>
</dbReference>
<dbReference type="RefSeq" id="NP_001417033.1">
    <property type="nucleotide sequence ID" value="NM_001430104.1"/>
</dbReference>
<dbReference type="RefSeq" id="NP_037089.1">
    <property type="nucleotide sequence ID" value="NM_012957.3"/>
</dbReference>
<dbReference type="RefSeq" id="XP_006246189.1">
    <property type="nucleotide sequence ID" value="XM_006246127.2"/>
</dbReference>
<dbReference type="SMR" id="P63138"/>
<dbReference type="BioGRID" id="247486">
    <property type="interactions" value="1"/>
</dbReference>
<dbReference type="ComplexPortal" id="CPX-250">
    <property type="entry name" value="GABA-A receptor, alpha1-beta2-gamma2"/>
</dbReference>
<dbReference type="ComplexPortal" id="CPX-407">
    <property type="entry name" value="GABA-A receptor, alpha6-beta2-delta"/>
</dbReference>
<dbReference type="ComplexPortal" id="CPX-408">
    <property type="entry name" value="GABA-A receptor, alpha4-beta2-delta"/>
</dbReference>
<dbReference type="CORUM" id="P63138"/>
<dbReference type="FunCoup" id="P63138">
    <property type="interactions" value="1032"/>
</dbReference>
<dbReference type="IntAct" id="P63138">
    <property type="interactions" value="2"/>
</dbReference>
<dbReference type="STRING" id="10116.ENSRNOP00000004970"/>
<dbReference type="BindingDB" id="P63138"/>
<dbReference type="ChEMBL" id="CHEMBL2095167"/>
<dbReference type="ChEMBL" id="CHEMBL2111327"/>
<dbReference type="ChEMBL" id="CHEMBL2111343"/>
<dbReference type="ChEMBL" id="CHEMBL2111365"/>
<dbReference type="ChEMBL" id="CHEMBL3883322"/>
<dbReference type="ChEMBL" id="CHEMBL4296055"/>
<dbReference type="ChEMBL" id="CHEMBL4296056"/>
<dbReference type="ChEMBL" id="CHEMBL4296063"/>
<dbReference type="DrugCentral" id="P63138"/>
<dbReference type="GlyCosmos" id="P63138">
    <property type="glycosylation" value="3 sites, No reported glycans"/>
</dbReference>
<dbReference type="GlyGen" id="P63138">
    <property type="glycosylation" value="3 sites"/>
</dbReference>
<dbReference type="iPTMnet" id="P63138"/>
<dbReference type="PhosphoSitePlus" id="P63138"/>
<dbReference type="PaxDb" id="10116-ENSRNOP00000004970"/>
<dbReference type="Ensembl" id="ENSRNOT00000118632.1">
    <property type="protein sequence ID" value="ENSRNOP00000081083.1"/>
    <property type="gene ID" value="ENSRNOG00000003680.6"/>
</dbReference>
<dbReference type="GeneID" id="25451"/>
<dbReference type="KEGG" id="rno:25451"/>
<dbReference type="UCSC" id="RGD:2650">
    <property type="organism name" value="rat"/>
</dbReference>
<dbReference type="AGR" id="RGD:2650"/>
<dbReference type="CTD" id="2561"/>
<dbReference type="RGD" id="2650">
    <property type="gene designation" value="Gabrb2"/>
</dbReference>
<dbReference type="eggNOG" id="KOG3643">
    <property type="taxonomic scope" value="Eukaryota"/>
</dbReference>
<dbReference type="GeneTree" id="ENSGT00940000154245"/>
<dbReference type="HOGENOM" id="CLU_010920_1_4_1"/>
<dbReference type="InParanoid" id="P63138"/>
<dbReference type="OrthoDB" id="8890589at2759"/>
<dbReference type="PhylomeDB" id="P63138"/>
<dbReference type="TreeFam" id="TF315453"/>
<dbReference type="Reactome" id="R-RNO-977443">
    <property type="pathway name" value="GABA receptor activation"/>
</dbReference>
<dbReference type="PRO" id="PR:P63138"/>
<dbReference type="Proteomes" id="UP000002494">
    <property type="component" value="Chromosome 10"/>
</dbReference>
<dbReference type="Bgee" id="ENSRNOG00000003680">
    <property type="expression patterns" value="Expressed in frontal cortex and 5 other cell types or tissues"/>
</dbReference>
<dbReference type="GO" id="GO:0034707">
    <property type="term" value="C:chloride channel complex"/>
    <property type="evidence" value="ECO:0007669"/>
    <property type="project" value="UniProtKB-KW"/>
</dbReference>
<dbReference type="GO" id="GO:0030659">
    <property type="term" value="C:cytoplasmic vesicle membrane"/>
    <property type="evidence" value="ECO:0007669"/>
    <property type="project" value="UniProtKB-SubCell"/>
</dbReference>
<dbReference type="GO" id="GO:0043197">
    <property type="term" value="C:dendritic spine"/>
    <property type="evidence" value="ECO:0000266"/>
    <property type="project" value="RGD"/>
</dbReference>
<dbReference type="GO" id="GO:1902710">
    <property type="term" value="C:GABA receptor complex"/>
    <property type="evidence" value="ECO:0000314"/>
    <property type="project" value="BHF-UCL"/>
</dbReference>
<dbReference type="GO" id="GO:1902711">
    <property type="term" value="C:GABA-A receptor complex"/>
    <property type="evidence" value="ECO:0000315"/>
    <property type="project" value="UniProtKB"/>
</dbReference>
<dbReference type="GO" id="GO:0098982">
    <property type="term" value="C:GABA-ergic synapse"/>
    <property type="evidence" value="ECO:0000314"/>
    <property type="project" value="SynGO"/>
</dbReference>
<dbReference type="GO" id="GO:0098978">
    <property type="term" value="C:glutamatergic synapse"/>
    <property type="evidence" value="ECO:0000314"/>
    <property type="project" value="SynGO"/>
</dbReference>
<dbReference type="GO" id="GO:0005886">
    <property type="term" value="C:plasma membrane"/>
    <property type="evidence" value="ECO:0000314"/>
    <property type="project" value="UniProtKB"/>
</dbReference>
<dbReference type="GO" id="GO:0045211">
    <property type="term" value="C:postsynaptic membrane"/>
    <property type="evidence" value="ECO:0000266"/>
    <property type="project" value="RGD"/>
</dbReference>
<dbReference type="GO" id="GO:0099634">
    <property type="term" value="C:postsynaptic specialization membrane"/>
    <property type="evidence" value="ECO:0000314"/>
    <property type="project" value="UniProtKB"/>
</dbReference>
<dbReference type="GO" id="GO:0048787">
    <property type="term" value="C:presynaptic active zone membrane"/>
    <property type="evidence" value="ECO:0000314"/>
    <property type="project" value="SynGO"/>
</dbReference>
<dbReference type="GO" id="GO:0005254">
    <property type="term" value="F:chloride channel activity"/>
    <property type="evidence" value="ECO:0000315"/>
    <property type="project" value="UniProtKB"/>
</dbReference>
<dbReference type="GO" id="GO:0004890">
    <property type="term" value="F:GABA-A receptor activity"/>
    <property type="evidence" value="ECO:0000315"/>
    <property type="project" value="UniProtKB"/>
</dbReference>
<dbReference type="GO" id="GO:0005237">
    <property type="term" value="F:inhibitory extracellular ligand-gated monoatomic ion channel activity"/>
    <property type="evidence" value="ECO:0000315"/>
    <property type="project" value="RGD"/>
</dbReference>
<dbReference type="GO" id="GO:0099507">
    <property type="term" value="F:ligand-gated monoatomic ion channel activity involved in regulation of presynaptic membrane potential"/>
    <property type="evidence" value="ECO:0000314"/>
    <property type="project" value="SynGO"/>
</dbReference>
<dbReference type="GO" id="GO:1904315">
    <property type="term" value="F:transmitter-gated monoatomic ion channel activity involved in regulation of postsynaptic membrane potential"/>
    <property type="evidence" value="ECO:0000266"/>
    <property type="project" value="RGD"/>
</dbReference>
<dbReference type="GO" id="GO:0071420">
    <property type="term" value="P:cellular response to histamine"/>
    <property type="evidence" value="ECO:0000314"/>
    <property type="project" value="UniProtKB"/>
</dbReference>
<dbReference type="GO" id="GO:1902476">
    <property type="term" value="P:chloride transmembrane transport"/>
    <property type="evidence" value="ECO:0000315"/>
    <property type="project" value="UniProtKB"/>
</dbReference>
<dbReference type="GO" id="GO:0090102">
    <property type="term" value="P:cochlea development"/>
    <property type="evidence" value="ECO:0000266"/>
    <property type="project" value="RGD"/>
</dbReference>
<dbReference type="GO" id="GO:0007214">
    <property type="term" value="P:gamma-aminobutyric acid signaling pathway"/>
    <property type="evidence" value="ECO:0000266"/>
    <property type="project" value="RGD"/>
</dbReference>
<dbReference type="GO" id="GO:1904862">
    <property type="term" value="P:inhibitory synapse assembly"/>
    <property type="evidence" value="ECO:0000250"/>
    <property type="project" value="UniProtKB"/>
</dbReference>
<dbReference type="GO" id="GO:0060119">
    <property type="term" value="P:inner ear receptor cell development"/>
    <property type="evidence" value="ECO:0000266"/>
    <property type="project" value="RGD"/>
</dbReference>
<dbReference type="GO" id="GO:0060384">
    <property type="term" value="P:innervation"/>
    <property type="evidence" value="ECO:0000266"/>
    <property type="project" value="RGD"/>
</dbReference>
<dbReference type="GO" id="GO:0048666">
    <property type="term" value="P:neuron development"/>
    <property type="evidence" value="ECO:0000266"/>
    <property type="project" value="RGD"/>
</dbReference>
<dbReference type="GO" id="GO:0051932">
    <property type="term" value="P:synaptic transmission, GABAergic"/>
    <property type="evidence" value="ECO:0000314"/>
    <property type="project" value="BHF-UCL"/>
</dbReference>
<dbReference type="CDD" id="cd18999">
    <property type="entry name" value="LGIC_ECD_GABAAR_B"/>
    <property type="match status" value="1"/>
</dbReference>
<dbReference type="CDD" id="cd19053">
    <property type="entry name" value="LGIC_TM_GABAAR_beta"/>
    <property type="match status" value="1"/>
</dbReference>
<dbReference type="FunFam" id="1.20.58.390:FF:000004">
    <property type="entry name" value="Gamma-aminobutyric acid receptor subunit beta-2 isoform A"/>
    <property type="match status" value="1"/>
</dbReference>
<dbReference type="FunFam" id="2.70.170.10:FF:000004">
    <property type="entry name" value="Gamma-aminobutyric acid receptor subunit beta-2 isoform A"/>
    <property type="match status" value="1"/>
</dbReference>
<dbReference type="Gene3D" id="2.70.170.10">
    <property type="entry name" value="Neurotransmitter-gated ion-channel ligand-binding domain"/>
    <property type="match status" value="1"/>
</dbReference>
<dbReference type="Gene3D" id="1.20.58.390">
    <property type="entry name" value="Neurotransmitter-gated ion-channel transmembrane domain"/>
    <property type="match status" value="1"/>
</dbReference>
<dbReference type="InterPro" id="IPR006028">
    <property type="entry name" value="GABAA/Glycine_rcpt"/>
</dbReference>
<dbReference type="InterPro" id="IPR002289">
    <property type="entry name" value="GABAAb_rcpt"/>
</dbReference>
<dbReference type="InterPro" id="IPR006202">
    <property type="entry name" value="Neur_chan_lig-bd"/>
</dbReference>
<dbReference type="InterPro" id="IPR036734">
    <property type="entry name" value="Neur_chan_lig-bd_sf"/>
</dbReference>
<dbReference type="InterPro" id="IPR006201">
    <property type="entry name" value="Neur_channel"/>
</dbReference>
<dbReference type="InterPro" id="IPR036719">
    <property type="entry name" value="Neuro-gated_channel_TM_sf"/>
</dbReference>
<dbReference type="InterPro" id="IPR038050">
    <property type="entry name" value="Neuro_actylchol_rec"/>
</dbReference>
<dbReference type="InterPro" id="IPR006029">
    <property type="entry name" value="Neurotrans-gated_channel_TM"/>
</dbReference>
<dbReference type="InterPro" id="IPR018000">
    <property type="entry name" value="Neurotransmitter_ion_chnl_CS"/>
</dbReference>
<dbReference type="NCBIfam" id="TIGR00860">
    <property type="entry name" value="LIC"/>
    <property type="match status" value="1"/>
</dbReference>
<dbReference type="PANTHER" id="PTHR18945">
    <property type="entry name" value="NEUROTRANSMITTER GATED ION CHANNEL"/>
    <property type="match status" value="1"/>
</dbReference>
<dbReference type="Pfam" id="PF02931">
    <property type="entry name" value="Neur_chan_LBD"/>
    <property type="match status" value="1"/>
</dbReference>
<dbReference type="Pfam" id="PF02932">
    <property type="entry name" value="Neur_chan_memb"/>
    <property type="match status" value="1"/>
</dbReference>
<dbReference type="PRINTS" id="PR01160">
    <property type="entry name" value="GABAARBETA"/>
</dbReference>
<dbReference type="PRINTS" id="PR00253">
    <property type="entry name" value="GABAARECEPTR"/>
</dbReference>
<dbReference type="PRINTS" id="PR00252">
    <property type="entry name" value="NRIONCHANNEL"/>
</dbReference>
<dbReference type="SUPFAM" id="SSF90112">
    <property type="entry name" value="Neurotransmitter-gated ion-channel transmembrane pore"/>
    <property type="match status" value="1"/>
</dbReference>
<dbReference type="SUPFAM" id="SSF63712">
    <property type="entry name" value="Nicotinic receptor ligand binding domain-like"/>
    <property type="match status" value="1"/>
</dbReference>
<dbReference type="PROSITE" id="PS00236">
    <property type="entry name" value="NEUROTR_ION_CHANNEL"/>
    <property type="match status" value="1"/>
</dbReference>
<comment type="function">
    <text evidence="2 6 10 12 14 16">Beta subunit of the heteropentameric ligand-gated chloride channel gated by gamma-aminobutyric acid (GABA), a major inhibitory neurotransmitter in the brain (PubMed:1660002, PubMed:2548852). GABA-gated chloride channels, also named GABA(A) receptors (GABAAR), consist of five subunits arranged around a central pore and contain GABA active binding site(s) located at the alpha and beta subunit interface(s) (By similarity). When activated by GABA, GABAARs selectively allow the flow of chloride anions across the cell membrane down their electrochemical gradient (PubMed:1660002). Chloride influx into the postsynaptic neuron following GABAAR opening decreases the neuron ability to generate a new action potential, thereby reducing nerve transmission (By similarity). GABAARs containing alpha-1 and beta-2 or -3 subunits exhibit synaptogenic activity; the gamma-2 subunit being necessary but not sufficient to induce rapid synaptic contacts formation (By similarity). Extrasynaptic beta-2 receptors contribute to the tonic GABAergic inhibition (PubMed:9464994). Beta-containing GABAARs can simultaneously bind GABA and histamine where histamine binds at the interface of two neighboring beta subunits, which may be involved in the regulation of sleep and wakefulness (PubMed:18281286).</text>
</comment>
<comment type="catalytic activity">
    <reaction evidence="10">
        <text>chloride(in) = chloride(out)</text>
        <dbReference type="Rhea" id="RHEA:29823"/>
        <dbReference type="ChEBI" id="CHEBI:17996"/>
    </reaction>
</comment>
<comment type="activity regulation">
    <text evidence="3 6 12">Allosterically activated by benzodiazepines and the anesthetic etomidate (By similarity). Inhibited by the antagonist bicuculline (By similarity). Potentiated by histamine (PubMed:18281286).</text>
</comment>
<comment type="subunit">
    <text evidence="9 10 12 13 15">Heteropentamer, formed by a combination of alpha (GABRA1-6), beta (GABRB1-3), gamma (GABRG1-3), delta (GABRD), epsilon (GABRE), rho (GABRR1-3), pi (GABRP) and theta (GABRQ) chains, each subunit exhibiting distinct physiological and pharmacological properties (PubMed:1660002, PubMed:18281286). Interacts with UBQLN1 (PubMed:11528422). May interact with KIF21B (PubMed:25172774). Identified in a complex of 720 kDa composed of LHFPL4, NLGN2, GABRA1, GABRB2, GABRG2 and GABRB3 (PubMed:28279354).</text>
</comment>
<comment type="subcellular location">
    <subcellularLocation>
        <location evidence="12 16">Postsynaptic cell membrane</location>
        <topology evidence="6">Multi-pass membrane protein</topology>
    </subcellularLocation>
    <subcellularLocation>
        <location evidence="12 16">Cell membrane</location>
        <topology evidence="6">Multi-pass membrane protein</topology>
    </subcellularLocation>
    <subcellularLocation>
        <location evidence="13">Cytoplasmic vesicle membrane</location>
    </subcellularLocation>
    <text evidence="16">The beta-2 subunits are present in Golgi synapses and on the extrasynaptic membranes (alpha-1/6-beta-2/3-gamma-2 receptors), and in some of the mossy fiber to granule cell synapses (alpha-6-beta-2/3-gamma-2 receptors). Present in GABAergic and glutamatergic synapses on granule cells (PubMed:9464994). The beta-2 subunit (alpha-6-beta-2/3-delta receptors) are found only on the extrasynaptic somatic and dendritic membranes (PubMed:9464994).</text>
</comment>
<comment type="tissue specificity">
    <text evidence="11 13 16">Expressed in brain (at protein level), in cerebellar granule cells. Expressed in lungs, in alveolar epithelium (PubMed:17003036).</text>
</comment>
<comment type="domain">
    <text evidence="7">The extracellular domain contributes to synaptic contact formation.</text>
</comment>
<comment type="domain">
    <text evidence="6">GABAARs subunits share a common topological structure: a peptide sequence made up of a long extracellular N-terminal, four transmembrane domains, intracellular or cytoplasmic domain located between the third and the fourth transmembrane domains.</text>
</comment>
<comment type="PTM">
    <text evidence="7">Glycosylated.</text>
</comment>
<comment type="similarity">
    <text evidence="17">Belongs to the ligand-gated ion channel (TC 1.A.9) family. Gamma-aminobutyric acid receptor (TC 1.A.9.5) subfamily. GABRB2 sub-subfamily.</text>
</comment>
<keyword id="KW-1003">Cell membrane</keyword>
<keyword id="KW-0868">Chloride</keyword>
<keyword id="KW-0869">Chloride channel</keyword>
<keyword id="KW-0968">Cytoplasmic vesicle</keyword>
<keyword id="KW-1015">Disulfide bond</keyword>
<keyword id="KW-0325">Glycoprotein</keyword>
<keyword id="KW-0407">Ion channel</keyword>
<keyword id="KW-0406">Ion transport</keyword>
<keyword id="KW-1071">Ligand-gated ion channel</keyword>
<keyword id="KW-0472">Membrane</keyword>
<keyword id="KW-0597">Phosphoprotein</keyword>
<keyword id="KW-0628">Postsynaptic cell membrane</keyword>
<keyword id="KW-0675">Receptor</keyword>
<keyword id="KW-1185">Reference proteome</keyword>
<keyword id="KW-0732">Signal</keyword>
<keyword id="KW-0770">Synapse</keyword>
<keyword id="KW-0812">Transmembrane</keyword>
<keyword id="KW-1133">Transmembrane helix</keyword>
<keyword id="KW-0813">Transport</keyword>
<organism>
    <name type="scientific">Rattus norvegicus</name>
    <name type="common">Rat</name>
    <dbReference type="NCBI Taxonomy" id="10116"/>
    <lineage>
        <taxon>Eukaryota</taxon>
        <taxon>Metazoa</taxon>
        <taxon>Chordata</taxon>
        <taxon>Craniata</taxon>
        <taxon>Vertebrata</taxon>
        <taxon>Euteleostomi</taxon>
        <taxon>Mammalia</taxon>
        <taxon>Eutheria</taxon>
        <taxon>Euarchontoglires</taxon>
        <taxon>Glires</taxon>
        <taxon>Rodentia</taxon>
        <taxon>Myomorpha</taxon>
        <taxon>Muroidea</taxon>
        <taxon>Muridae</taxon>
        <taxon>Murinae</taxon>
        <taxon>Rattus</taxon>
    </lineage>
</organism>
<evidence type="ECO:0000250" key="1"/>
<evidence type="ECO:0000250" key="2">
    <source>
        <dbReference type="UniProtKB" id="P08219"/>
    </source>
</evidence>
<evidence type="ECO:0000250" key="3">
    <source>
        <dbReference type="UniProtKB" id="P0C2W5"/>
    </source>
</evidence>
<evidence type="ECO:0000250" key="4">
    <source>
        <dbReference type="UniProtKB" id="P15431"/>
    </source>
</evidence>
<evidence type="ECO:0000250" key="5">
    <source>
        <dbReference type="UniProtKB" id="P28472"/>
    </source>
</evidence>
<evidence type="ECO:0000250" key="6">
    <source>
        <dbReference type="UniProtKB" id="P47870"/>
    </source>
</evidence>
<evidence type="ECO:0000250" key="7">
    <source>
        <dbReference type="UniProtKB" id="P63137"/>
    </source>
</evidence>
<evidence type="ECO:0000255" key="8"/>
<evidence type="ECO:0000269" key="9">
    <source>
    </source>
</evidence>
<evidence type="ECO:0000269" key="10">
    <source>
    </source>
</evidence>
<evidence type="ECO:0000269" key="11">
    <source>
    </source>
</evidence>
<evidence type="ECO:0000269" key="12">
    <source>
    </source>
</evidence>
<evidence type="ECO:0000269" key="13">
    <source>
    </source>
</evidence>
<evidence type="ECO:0000269" key="14">
    <source>
    </source>
</evidence>
<evidence type="ECO:0000269" key="15">
    <source>
    </source>
</evidence>
<evidence type="ECO:0000269" key="16">
    <source>
    </source>
</evidence>
<evidence type="ECO:0000305" key="17"/>
<evidence type="ECO:0000312" key="18">
    <source>
        <dbReference type="RGD" id="2650"/>
    </source>
</evidence>